<proteinExistence type="inferred from homology"/>
<comment type="similarity">
    <text evidence="1">Belongs to the CinA family.</text>
</comment>
<accession>B5ED03</accession>
<keyword id="KW-1185">Reference proteome</keyword>
<gene>
    <name type="ordered locus">Gbem_3628</name>
</gene>
<name>CINAL_CITBB</name>
<dbReference type="EMBL" id="CP001124">
    <property type="protein sequence ID" value="ACH40620.1"/>
    <property type="molecule type" value="Genomic_DNA"/>
</dbReference>
<dbReference type="RefSeq" id="WP_012532057.1">
    <property type="nucleotide sequence ID" value="NC_011146.1"/>
</dbReference>
<dbReference type="SMR" id="B5ED03"/>
<dbReference type="STRING" id="404380.Gbem_3628"/>
<dbReference type="KEGG" id="gbm:Gbem_3628"/>
<dbReference type="eggNOG" id="COG1058">
    <property type="taxonomic scope" value="Bacteria"/>
</dbReference>
<dbReference type="eggNOG" id="COG1546">
    <property type="taxonomic scope" value="Bacteria"/>
</dbReference>
<dbReference type="HOGENOM" id="CLU_030805_9_2_7"/>
<dbReference type="OrthoDB" id="9801454at2"/>
<dbReference type="Proteomes" id="UP000008825">
    <property type="component" value="Chromosome"/>
</dbReference>
<dbReference type="CDD" id="cd00885">
    <property type="entry name" value="cinA"/>
    <property type="match status" value="1"/>
</dbReference>
<dbReference type="Gene3D" id="3.30.70.2860">
    <property type="match status" value="1"/>
</dbReference>
<dbReference type="Gene3D" id="3.90.950.20">
    <property type="entry name" value="CinA-like"/>
    <property type="match status" value="1"/>
</dbReference>
<dbReference type="Gene3D" id="3.40.980.10">
    <property type="entry name" value="MoaB/Mog-like domain"/>
    <property type="match status" value="1"/>
</dbReference>
<dbReference type="HAMAP" id="MF_00226_B">
    <property type="entry name" value="CinA_B"/>
    <property type="match status" value="1"/>
</dbReference>
<dbReference type="InterPro" id="IPR050101">
    <property type="entry name" value="CinA"/>
</dbReference>
<dbReference type="InterPro" id="IPR036653">
    <property type="entry name" value="CinA-like_C"/>
</dbReference>
<dbReference type="InterPro" id="IPR008136">
    <property type="entry name" value="CinA_C"/>
</dbReference>
<dbReference type="InterPro" id="IPR041424">
    <property type="entry name" value="CinA_KH"/>
</dbReference>
<dbReference type="InterPro" id="IPR008135">
    <property type="entry name" value="Competence-induced_CinA"/>
</dbReference>
<dbReference type="InterPro" id="IPR036425">
    <property type="entry name" value="MoaB/Mog-like_dom_sf"/>
</dbReference>
<dbReference type="InterPro" id="IPR001453">
    <property type="entry name" value="MoaB/Mog_dom"/>
</dbReference>
<dbReference type="NCBIfam" id="TIGR00200">
    <property type="entry name" value="cinA_nterm"/>
    <property type="match status" value="1"/>
</dbReference>
<dbReference type="NCBIfam" id="TIGR00177">
    <property type="entry name" value="molyb_syn"/>
    <property type="match status" value="1"/>
</dbReference>
<dbReference type="NCBIfam" id="TIGR00199">
    <property type="entry name" value="PncC_domain"/>
    <property type="match status" value="1"/>
</dbReference>
<dbReference type="NCBIfam" id="NF001813">
    <property type="entry name" value="PRK00549.1"/>
    <property type="match status" value="1"/>
</dbReference>
<dbReference type="PANTHER" id="PTHR13939">
    <property type="entry name" value="NICOTINAMIDE-NUCLEOTIDE AMIDOHYDROLASE PNCC"/>
    <property type="match status" value="1"/>
</dbReference>
<dbReference type="PANTHER" id="PTHR13939:SF0">
    <property type="entry name" value="NMN AMIDOHYDROLASE-LIKE PROTEIN YFAY"/>
    <property type="match status" value="1"/>
</dbReference>
<dbReference type="Pfam" id="PF02464">
    <property type="entry name" value="CinA"/>
    <property type="match status" value="1"/>
</dbReference>
<dbReference type="Pfam" id="PF18146">
    <property type="entry name" value="CinA_KH"/>
    <property type="match status" value="1"/>
</dbReference>
<dbReference type="Pfam" id="PF00994">
    <property type="entry name" value="MoCF_biosynth"/>
    <property type="match status" value="1"/>
</dbReference>
<dbReference type="PIRSF" id="PIRSF006728">
    <property type="entry name" value="CinA"/>
    <property type="match status" value="1"/>
</dbReference>
<dbReference type="SMART" id="SM00852">
    <property type="entry name" value="MoCF_biosynth"/>
    <property type="match status" value="1"/>
</dbReference>
<dbReference type="SUPFAM" id="SSF142433">
    <property type="entry name" value="CinA-like"/>
    <property type="match status" value="1"/>
</dbReference>
<dbReference type="SUPFAM" id="SSF53218">
    <property type="entry name" value="Molybdenum cofactor biosynthesis proteins"/>
    <property type="match status" value="1"/>
</dbReference>
<reference key="1">
    <citation type="submission" date="2008-07" db="EMBL/GenBank/DDBJ databases">
        <title>Complete sequence of Geobacter bemidjiensis BEM.</title>
        <authorList>
            <consortium name="US DOE Joint Genome Institute"/>
            <person name="Lucas S."/>
            <person name="Copeland A."/>
            <person name="Lapidus A."/>
            <person name="Glavina del Rio T."/>
            <person name="Dalin E."/>
            <person name="Tice H."/>
            <person name="Bruce D."/>
            <person name="Goodwin L."/>
            <person name="Pitluck S."/>
            <person name="Kiss H."/>
            <person name="Brettin T."/>
            <person name="Detter J.C."/>
            <person name="Han C."/>
            <person name="Kuske C.R."/>
            <person name="Schmutz J."/>
            <person name="Larimer F."/>
            <person name="Land M."/>
            <person name="Hauser L."/>
            <person name="Kyrpides N."/>
            <person name="Lykidis A."/>
            <person name="Lovley D."/>
            <person name="Richardson P."/>
        </authorList>
    </citation>
    <scope>NUCLEOTIDE SEQUENCE [LARGE SCALE GENOMIC DNA]</scope>
    <source>
        <strain>ATCC BAA-1014 / DSM 16622 / JCM 12645 / Bem</strain>
    </source>
</reference>
<evidence type="ECO:0000255" key="1">
    <source>
        <dbReference type="HAMAP-Rule" id="MF_00226"/>
    </source>
</evidence>
<sequence length="414" mass="44252">MRVAVLSIGDELLSGEVVDTNASHIADRLFQAGGRVERHLTVPDDAEAIASALTELGARSDAVIVTGGLGPTPDDLTAEAAARAAGTELELSSEALDHLERFAQRITGELHPANRRQALLPKGCRLIPNPLGTALGFVVRIGQADCFFMPGVPYEMERMLEETVLPELTGRFEAGWQRVTLKLFGIAEAAIAELLEGAIPEGSPVQLAYCVKFPEIHLILRATASDAPFLQQAAGELRQRLSAYLFAEDREEMDDRLALLLRESGLTLALAESCTGGMIAARITAVAGSSAYFLEGNVTYSNEAKTRMLQVPAPLIAEHGAVSAEVARAMAVGAREAAGSDLALSVTGIAGPDGGTPEKPVGTVYLALVDQGSCRVERFNFQGDRDRVRSITCFTALDWLRRYLLTRKTTPGRG</sequence>
<organism>
    <name type="scientific">Citrifermentans bemidjiense (strain ATCC BAA-1014 / DSM 16622 / JCM 12645 / Bem)</name>
    <name type="common">Geobacter bemidjiensis</name>
    <dbReference type="NCBI Taxonomy" id="404380"/>
    <lineage>
        <taxon>Bacteria</taxon>
        <taxon>Pseudomonadati</taxon>
        <taxon>Thermodesulfobacteriota</taxon>
        <taxon>Desulfuromonadia</taxon>
        <taxon>Geobacterales</taxon>
        <taxon>Geobacteraceae</taxon>
        <taxon>Citrifermentans</taxon>
    </lineage>
</organism>
<feature type="chain" id="PRO_1000100321" description="CinA-like protein">
    <location>
        <begin position="1"/>
        <end position="414"/>
    </location>
</feature>
<protein>
    <recommendedName>
        <fullName evidence="1">CinA-like protein</fullName>
    </recommendedName>
</protein>